<keyword id="KW-0028">Amino-acid biosynthesis</keyword>
<keyword id="KW-0963">Cytoplasm</keyword>
<keyword id="KW-0554">One-carbon metabolism</keyword>
<keyword id="KW-0663">Pyridoxal phosphate</keyword>
<keyword id="KW-0808">Transferase</keyword>
<evidence type="ECO:0000255" key="1">
    <source>
        <dbReference type="HAMAP-Rule" id="MF_00051"/>
    </source>
</evidence>
<reference key="1">
    <citation type="journal article" date="2010" name="J. Bacteriol.">
        <title>Whole genome sequences of two Xylella fastidiosa strains (M12 and M23) causing almond leaf scorch disease in California.</title>
        <authorList>
            <person name="Chen J."/>
            <person name="Xie G."/>
            <person name="Han S."/>
            <person name="Chertkov O."/>
            <person name="Sims D."/>
            <person name="Civerolo E.L."/>
        </authorList>
    </citation>
    <scope>NUCLEOTIDE SEQUENCE [LARGE SCALE GENOMIC DNA]</scope>
    <source>
        <strain>M23</strain>
    </source>
</reference>
<proteinExistence type="inferred from homology"/>
<organism>
    <name type="scientific">Xylella fastidiosa (strain M23)</name>
    <dbReference type="NCBI Taxonomy" id="405441"/>
    <lineage>
        <taxon>Bacteria</taxon>
        <taxon>Pseudomonadati</taxon>
        <taxon>Pseudomonadota</taxon>
        <taxon>Gammaproteobacteria</taxon>
        <taxon>Lysobacterales</taxon>
        <taxon>Lysobacteraceae</taxon>
        <taxon>Xylella</taxon>
    </lineage>
</organism>
<sequence>MFPRDARLDMYDPELAKAIAAEVRRQEDHVELIASENYCSTLVMQVQGSQLTNKYAEGYSGKRYYGGCEYVDIAEQLAIERAKKLFGADYANVQPHSGSQANQAVYFALLQPGDTILGMSLAHGGHLTHGANVNVSGKLFNAVQYGVNAQGLIDYEAVESLALEHRPKMVVAGFSAYSQKIDWARFRAIADQVGAYLLVDMAHVAGLVAAGVYPSPLPHAHVVTSTTHKTLRGPRGGIIVAQAPQEALVKKLQSIVFPGIQGGPLMHVIAAKAVAFKEALEPAFKVYQQQVVKNAKAMAGTLMLRGYKIVSGGTENHLMLVDMIGRDVSGKDAEGALGQVHITVNKNAVPDDPRSPFVTSGLRLGTPAVTTRGYQEQDCVDLAHWIADVLDAPADVTVIAAVREKVAAQCKKYPVYR</sequence>
<dbReference type="EC" id="2.1.2.1" evidence="1"/>
<dbReference type="EMBL" id="CP001011">
    <property type="protein sequence ID" value="ACB93251.1"/>
    <property type="molecule type" value="Genomic_DNA"/>
</dbReference>
<dbReference type="RefSeq" id="WP_012382734.1">
    <property type="nucleotide sequence ID" value="NC_010577.1"/>
</dbReference>
<dbReference type="SMR" id="B2I8R0"/>
<dbReference type="GeneID" id="93905596"/>
<dbReference type="KEGG" id="xfn:XfasM23_1851"/>
<dbReference type="HOGENOM" id="CLU_022477_2_1_6"/>
<dbReference type="UniPathway" id="UPA00193"/>
<dbReference type="UniPathway" id="UPA00288">
    <property type="reaction ID" value="UER01023"/>
</dbReference>
<dbReference type="Proteomes" id="UP000001698">
    <property type="component" value="Chromosome"/>
</dbReference>
<dbReference type="GO" id="GO:0005829">
    <property type="term" value="C:cytosol"/>
    <property type="evidence" value="ECO:0007669"/>
    <property type="project" value="TreeGrafter"/>
</dbReference>
<dbReference type="GO" id="GO:0004372">
    <property type="term" value="F:glycine hydroxymethyltransferase activity"/>
    <property type="evidence" value="ECO:0007669"/>
    <property type="project" value="UniProtKB-UniRule"/>
</dbReference>
<dbReference type="GO" id="GO:0030170">
    <property type="term" value="F:pyridoxal phosphate binding"/>
    <property type="evidence" value="ECO:0007669"/>
    <property type="project" value="UniProtKB-UniRule"/>
</dbReference>
<dbReference type="GO" id="GO:0019264">
    <property type="term" value="P:glycine biosynthetic process from serine"/>
    <property type="evidence" value="ECO:0007669"/>
    <property type="project" value="UniProtKB-UniRule"/>
</dbReference>
<dbReference type="GO" id="GO:0035999">
    <property type="term" value="P:tetrahydrofolate interconversion"/>
    <property type="evidence" value="ECO:0007669"/>
    <property type="project" value="UniProtKB-UniRule"/>
</dbReference>
<dbReference type="CDD" id="cd00378">
    <property type="entry name" value="SHMT"/>
    <property type="match status" value="1"/>
</dbReference>
<dbReference type="FunFam" id="3.40.640.10:FF:000001">
    <property type="entry name" value="Serine hydroxymethyltransferase"/>
    <property type="match status" value="1"/>
</dbReference>
<dbReference type="FunFam" id="3.90.1150.10:FF:000003">
    <property type="entry name" value="Serine hydroxymethyltransferase"/>
    <property type="match status" value="1"/>
</dbReference>
<dbReference type="Gene3D" id="3.90.1150.10">
    <property type="entry name" value="Aspartate Aminotransferase, domain 1"/>
    <property type="match status" value="1"/>
</dbReference>
<dbReference type="Gene3D" id="3.40.640.10">
    <property type="entry name" value="Type I PLP-dependent aspartate aminotransferase-like (Major domain)"/>
    <property type="match status" value="1"/>
</dbReference>
<dbReference type="HAMAP" id="MF_00051">
    <property type="entry name" value="SHMT"/>
    <property type="match status" value="1"/>
</dbReference>
<dbReference type="InterPro" id="IPR015424">
    <property type="entry name" value="PyrdxlP-dep_Trfase"/>
</dbReference>
<dbReference type="InterPro" id="IPR015421">
    <property type="entry name" value="PyrdxlP-dep_Trfase_major"/>
</dbReference>
<dbReference type="InterPro" id="IPR015422">
    <property type="entry name" value="PyrdxlP-dep_Trfase_small"/>
</dbReference>
<dbReference type="InterPro" id="IPR001085">
    <property type="entry name" value="Ser_HO-MeTrfase"/>
</dbReference>
<dbReference type="InterPro" id="IPR049943">
    <property type="entry name" value="Ser_HO-MeTrfase-like"/>
</dbReference>
<dbReference type="InterPro" id="IPR019798">
    <property type="entry name" value="Ser_HO-MeTrfase_PLP_BS"/>
</dbReference>
<dbReference type="InterPro" id="IPR039429">
    <property type="entry name" value="SHMT-like_dom"/>
</dbReference>
<dbReference type="NCBIfam" id="NF000586">
    <property type="entry name" value="PRK00011.1"/>
    <property type="match status" value="1"/>
</dbReference>
<dbReference type="PANTHER" id="PTHR11680">
    <property type="entry name" value="SERINE HYDROXYMETHYLTRANSFERASE"/>
    <property type="match status" value="1"/>
</dbReference>
<dbReference type="PANTHER" id="PTHR11680:SF50">
    <property type="entry name" value="SERINE HYDROXYMETHYLTRANSFERASE"/>
    <property type="match status" value="1"/>
</dbReference>
<dbReference type="Pfam" id="PF00464">
    <property type="entry name" value="SHMT"/>
    <property type="match status" value="1"/>
</dbReference>
<dbReference type="PIRSF" id="PIRSF000412">
    <property type="entry name" value="SHMT"/>
    <property type="match status" value="1"/>
</dbReference>
<dbReference type="SUPFAM" id="SSF53383">
    <property type="entry name" value="PLP-dependent transferases"/>
    <property type="match status" value="1"/>
</dbReference>
<dbReference type="PROSITE" id="PS00096">
    <property type="entry name" value="SHMT"/>
    <property type="match status" value="1"/>
</dbReference>
<name>GLYA_XYLF2</name>
<accession>B2I8R0</accession>
<protein>
    <recommendedName>
        <fullName evidence="1">Serine hydroxymethyltransferase</fullName>
        <shortName evidence="1">SHMT</shortName>
        <shortName evidence="1">Serine methylase</shortName>
        <ecNumber evidence="1">2.1.2.1</ecNumber>
    </recommendedName>
</protein>
<gene>
    <name evidence="1" type="primary">glyA</name>
    <name type="ordered locus">XfasM23_1851</name>
</gene>
<feature type="chain" id="PRO_1000091598" description="Serine hydroxymethyltransferase">
    <location>
        <begin position="1"/>
        <end position="417"/>
    </location>
</feature>
<feature type="binding site" evidence="1">
    <location>
        <position position="121"/>
    </location>
    <ligand>
        <name>(6S)-5,6,7,8-tetrahydrofolate</name>
        <dbReference type="ChEBI" id="CHEBI:57453"/>
    </ligand>
</feature>
<feature type="binding site" evidence="1">
    <location>
        <begin position="125"/>
        <end position="127"/>
    </location>
    <ligand>
        <name>(6S)-5,6,7,8-tetrahydrofolate</name>
        <dbReference type="ChEBI" id="CHEBI:57453"/>
    </ligand>
</feature>
<feature type="binding site" evidence="1">
    <location>
        <begin position="355"/>
        <end position="357"/>
    </location>
    <ligand>
        <name>(6S)-5,6,7,8-tetrahydrofolate</name>
        <dbReference type="ChEBI" id="CHEBI:57453"/>
    </ligand>
</feature>
<feature type="site" description="Plays an important role in substrate specificity" evidence="1">
    <location>
        <position position="228"/>
    </location>
</feature>
<feature type="modified residue" description="N6-(pyridoxal phosphate)lysine" evidence="1">
    <location>
        <position position="229"/>
    </location>
</feature>
<comment type="function">
    <text evidence="1">Catalyzes the reversible interconversion of serine and glycine with tetrahydrofolate (THF) serving as the one-carbon carrier. This reaction serves as the major source of one-carbon groups required for the biosynthesis of purines, thymidylate, methionine, and other important biomolecules. Also exhibits THF-independent aldolase activity toward beta-hydroxyamino acids, producing glycine and aldehydes, via a retro-aldol mechanism.</text>
</comment>
<comment type="catalytic activity">
    <reaction evidence="1">
        <text>(6R)-5,10-methylene-5,6,7,8-tetrahydrofolate + glycine + H2O = (6S)-5,6,7,8-tetrahydrofolate + L-serine</text>
        <dbReference type="Rhea" id="RHEA:15481"/>
        <dbReference type="ChEBI" id="CHEBI:15377"/>
        <dbReference type="ChEBI" id="CHEBI:15636"/>
        <dbReference type="ChEBI" id="CHEBI:33384"/>
        <dbReference type="ChEBI" id="CHEBI:57305"/>
        <dbReference type="ChEBI" id="CHEBI:57453"/>
        <dbReference type="EC" id="2.1.2.1"/>
    </reaction>
</comment>
<comment type="cofactor">
    <cofactor evidence="1">
        <name>pyridoxal 5'-phosphate</name>
        <dbReference type="ChEBI" id="CHEBI:597326"/>
    </cofactor>
</comment>
<comment type="pathway">
    <text evidence="1">One-carbon metabolism; tetrahydrofolate interconversion.</text>
</comment>
<comment type="pathway">
    <text evidence="1">Amino-acid biosynthesis; glycine biosynthesis; glycine from L-serine: step 1/1.</text>
</comment>
<comment type="subunit">
    <text evidence="1">Homodimer.</text>
</comment>
<comment type="subcellular location">
    <subcellularLocation>
        <location evidence="1">Cytoplasm</location>
    </subcellularLocation>
</comment>
<comment type="similarity">
    <text evidence="1">Belongs to the SHMT family.</text>
</comment>